<proteinExistence type="inferred from homology"/>
<gene>
    <name type="ordered locus">Spro_0510</name>
</gene>
<feature type="chain" id="PRO_1000062216" description="UPF0306 protein Spro_0510">
    <location>
        <begin position="1"/>
        <end position="144"/>
    </location>
</feature>
<reference key="1">
    <citation type="submission" date="2007-09" db="EMBL/GenBank/DDBJ databases">
        <title>Complete sequence of chromosome of Serratia proteamaculans 568.</title>
        <authorList>
            <consortium name="US DOE Joint Genome Institute"/>
            <person name="Copeland A."/>
            <person name="Lucas S."/>
            <person name="Lapidus A."/>
            <person name="Barry K."/>
            <person name="Glavina del Rio T."/>
            <person name="Dalin E."/>
            <person name="Tice H."/>
            <person name="Pitluck S."/>
            <person name="Chain P."/>
            <person name="Malfatti S."/>
            <person name="Shin M."/>
            <person name="Vergez L."/>
            <person name="Schmutz J."/>
            <person name="Larimer F."/>
            <person name="Land M."/>
            <person name="Hauser L."/>
            <person name="Kyrpides N."/>
            <person name="Kim E."/>
            <person name="Taghavi S."/>
            <person name="Newman L."/>
            <person name="Vangronsveld J."/>
            <person name="van der Lelie D."/>
            <person name="Richardson P."/>
        </authorList>
    </citation>
    <scope>NUCLEOTIDE SEQUENCE [LARGE SCALE GENOMIC DNA]</scope>
    <source>
        <strain>568</strain>
    </source>
</reference>
<protein>
    <recommendedName>
        <fullName evidence="1">UPF0306 protein Spro_0510</fullName>
    </recommendedName>
</protein>
<organism>
    <name type="scientific">Serratia proteamaculans (strain 568)</name>
    <dbReference type="NCBI Taxonomy" id="399741"/>
    <lineage>
        <taxon>Bacteria</taxon>
        <taxon>Pseudomonadati</taxon>
        <taxon>Pseudomonadota</taxon>
        <taxon>Gammaproteobacteria</taxon>
        <taxon>Enterobacterales</taxon>
        <taxon>Yersiniaceae</taxon>
        <taxon>Serratia</taxon>
    </lineage>
</organism>
<evidence type="ECO:0000255" key="1">
    <source>
        <dbReference type="HAMAP-Rule" id="MF_00764"/>
    </source>
</evidence>
<dbReference type="EMBL" id="CP000826">
    <property type="protein sequence ID" value="ABV39618.1"/>
    <property type="molecule type" value="Genomic_DNA"/>
</dbReference>
<dbReference type="SMR" id="A8G928"/>
<dbReference type="STRING" id="399741.Spro_0510"/>
<dbReference type="KEGG" id="spe:Spro_0510"/>
<dbReference type="eggNOG" id="COG3787">
    <property type="taxonomic scope" value="Bacteria"/>
</dbReference>
<dbReference type="HOGENOM" id="CLU_105087_3_0_6"/>
<dbReference type="OrthoDB" id="8447155at2"/>
<dbReference type="Gene3D" id="2.30.110.10">
    <property type="entry name" value="Electron Transport, Fmn-binding Protein, Chain A"/>
    <property type="match status" value="1"/>
</dbReference>
<dbReference type="HAMAP" id="MF_00764">
    <property type="entry name" value="UPF0306"/>
    <property type="match status" value="1"/>
</dbReference>
<dbReference type="InterPro" id="IPR012349">
    <property type="entry name" value="Split_barrel_FMN-bd"/>
</dbReference>
<dbReference type="InterPro" id="IPR011194">
    <property type="entry name" value="UPF0306"/>
</dbReference>
<dbReference type="NCBIfam" id="NF002900">
    <property type="entry name" value="PRK03467.1"/>
    <property type="match status" value="1"/>
</dbReference>
<dbReference type="PIRSF" id="PIRSF009554">
    <property type="entry name" value="UCP009554"/>
    <property type="match status" value="1"/>
</dbReference>
<dbReference type="SUPFAM" id="SSF50475">
    <property type="entry name" value="FMN-binding split barrel"/>
    <property type="match status" value="1"/>
</dbReference>
<name>Y510_SERP5</name>
<accession>A8G928</accession>
<comment type="similarity">
    <text evidence="1">Belongs to the UPF0306 family.</text>
</comment>
<sequence length="144" mass="16446">MNTTEEQQQIAHFLSKQHVLTLCAGNGMDMWCANCFYVFDAGQMALWLMTETHTRHGELMLQNSRVVGTIAPKPKTIALIRGVQYRAEAVMLSGDEERLARARYCKRFPIAKVMKAPVWQLSLQEVKMTDNTLGFGTKLHWTRT</sequence>